<sequence>MDDTVLDDIIKKLVSAKNGRTTKQVHLTEADIRQLCTSAKEIFLSQPNLLELEAPIKICGDVHGQFSDLLRLFEYGGYPPEANYLFLGDYVDRGKQSIETICLLLAYKIKYKENFFLLRGNHECASINRIYGFYDECKRRYNVRLWKTFTDCFNCLPVAALVDEKILCMHGGLSPELKNLDQIRNIARPIDVPDHGLLCDLLWADPDKDLEGWGENDRGVSFTFGADKVVEFLEHHDLDLICRAHQVVEDGYEFFAKRKLVTVFSAPNYCGEFDNAGAMMSVDDSLTCSFQILKSSDKKGKVGFGNNSSRPGTPPHKGGKN</sequence>
<comment type="catalytic activity">
    <reaction>
        <text>O-phospho-L-seryl-[protein] + H2O = L-seryl-[protein] + phosphate</text>
        <dbReference type="Rhea" id="RHEA:20629"/>
        <dbReference type="Rhea" id="RHEA-COMP:9863"/>
        <dbReference type="Rhea" id="RHEA-COMP:11604"/>
        <dbReference type="ChEBI" id="CHEBI:15377"/>
        <dbReference type="ChEBI" id="CHEBI:29999"/>
        <dbReference type="ChEBI" id="CHEBI:43474"/>
        <dbReference type="ChEBI" id="CHEBI:83421"/>
        <dbReference type="EC" id="3.1.3.16"/>
    </reaction>
</comment>
<comment type="catalytic activity">
    <reaction>
        <text>O-phospho-L-threonyl-[protein] + H2O = L-threonyl-[protein] + phosphate</text>
        <dbReference type="Rhea" id="RHEA:47004"/>
        <dbReference type="Rhea" id="RHEA-COMP:11060"/>
        <dbReference type="Rhea" id="RHEA-COMP:11605"/>
        <dbReference type="ChEBI" id="CHEBI:15377"/>
        <dbReference type="ChEBI" id="CHEBI:30013"/>
        <dbReference type="ChEBI" id="CHEBI:43474"/>
        <dbReference type="ChEBI" id="CHEBI:61977"/>
        <dbReference type="EC" id="3.1.3.16"/>
    </reaction>
</comment>
<comment type="cofactor">
    <cofactor evidence="1">
        <name>Mn(2+)</name>
        <dbReference type="ChEBI" id="CHEBI:29035"/>
    </cofactor>
    <text evidence="1">Binds 2 manganese ions per subunit.</text>
</comment>
<comment type="similarity">
    <text evidence="3">Belongs to the PPP phosphatase family. PP-1 subfamily.</text>
</comment>
<proteinExistence type="evidence at transcript level"/>
<reference key="1">
    <citation type="journal article" date="1994" name="Mol. Gen. Genet.">
        <title>Isolation and characterization of phosphoprotein phosphatase 1 from alfalfa.</title>
        <authorList>
            <person name="Pay A."/>
            <person name="Pirck M."/>
            <person name="Boerge L."/>
            <person name="Hirt H."/>
            <person name="Heberle-Bors E."/>
        </authorList>
    </citation>
    <scope>NUCLEOTIDE SEQUENCE [MRNA]</scope>
</reference>
<dbReference type="EC" id="3.1.3.16"/>
<dbReference type="EMBL" id="X80788">
    <property type="protein sequence ID" value="CAA56766.1"/>
    <property type="molecule type" value="mRNA"/>
</dbReference>
<dbReference type="PIR" id="S46282">
    <property type="entry name" value="S46282"/>
</dbReference>
<dbReference type="SMR" id="P48488"/>
<dbReference type="GO" id="GO:0005737">
    <property type="term" value="C:cytoplasm"/>
    <property type="evidence" value="ECO:0007669"/>
    <property type="project" value="TreeGrafter"/>
</dbReference>
<dbReference type="GO" id="GO:0005634">
    <property type="term" value="C:nucleus"/>
    <property type="evidence" value="ECO:0007669"/>
    <property type="project" value="TreeGrafter"/>
</dbReference>
<dbReference type="GO" id="GO:0046872">
    <property type="term" value="F:metal ion binding"/>
    <property type="evidence" value="ECO:0007669"/>
    <property type="project" value="UniProtKB-KW"/>
</dbReference>
<dbReference type="GO" id="GO:0004722">
    <property type="term" value="F:protein serine/threonine phosphatase activity"/>
    <property type="evidence" value="ECO:0007669"/>
    <property type="project" value="UniProtKB-EC"/>
</dbReference>
<dbReference type="CDD" id="cd07414">
    <property type="entry name" value="MPP_PP1_PPKL"/>
    <property type="match status" value="1"/>
</dbReference>
<dbReference type="FunFam" id="3.60.21.10:FF:000026">
    <property type="entry name" value="Serine/threonine-protein phosphatase"/>
    <property type="match status" value="1"/>
</dbReference>
<dbReference type="Gene3D" id="3.60.21.10">
    <property type="match status" value="1"/>
</dbReference>
<dbReference type="InterPro" id="IPR004843">
    <property type="entry name" value="Calcineurin-like_PHP_ApaH"/>
</dbReference>
<dbReference type="InterPro" id="IPR029052">
    <property type="entry name" value="Metallo-depent_PP-like"/>
</dbReference>
<dbReference type="InterPro" id="IPR050341">
    <property type="entry name" value="PP1_catalytic_subunit"/>
</dbReference>
<dbReference type="InterPro" id="IPR006186">
    <property type="entry name" value="Ser/Thr-sp_prot-phosphatase"/>
</dbReference>
<dbReference type="InterPro" id="IPR031675">
    <property type="entry name" value="STPPase_N"/>
</dbReference>
<dbReference type="PANTHER" id="PTHR11668">
    <property type="entry name" value="SERINE/THREONINE PROTEIN PHOSPHATASE"/>
    <property type="match status" value="1"/>
</dbReference>
<dbReference type="PANTHER" id="PTHR11668:SF504">
    <property type="entry name" value="SERINE_THREONINE-PROTEIN PHOSPHATASE PP1 ISOZYME 6"/>
    <property type="match status" value="1"/>
</dbReference>
<dbReference type="Pfam" id="PF00149">
    <property type="entry name" value="Metallophos"/>
    <property type="match status" value="1"/>
</dbReference>
<dbReference type="Pfam" id="PF16891">
    <property type="entry name" value="STPPase_N"/>
    <property type="match status" value="1"/>
</dbReference>
<dbReference type="PRINTS" id="PR00114">
    <property type="entry name" value="STPHPHTASE"/>
</dbReference>
<dbReference type="SMART" id="SM00156">
    <property type="entry name" value="PP2Ac"/>
    <property type="match status" value="1"/>
</dbReference>
<dbReference type="SUPFAM" id="SSF56300">
    <property type="entry name" value="Metallo-dependent phosphatases"/>
    <property type="match status" value="1"/>
</dbReference>
<dbReference type="PROSITE" id="PS00125">
    <property type="entry name" value="SER_THR_PHOSPHATASE"/>
    <property type="match status" value="1"/>
</dbReference>
<gene>
    <name type="primary">PP1</name>
</gene>
<keyword id="KW-0378">Hydrolase</keyword>
<keyword id="KW-0464">Manganese</keyword>
<keyword id="KW-0479">Metal-binding</keyword>
<keyword id="KW-0904">Protein phosphatase</keyword>
<evidence type="ECO:0000250" key="1"/>
<evidence type="ECO:0000256" key="2">
    <source>
        <dbReference type="SAM" id="MobiDB-lite"/>
    </source>
</evidence>
<evidence type="ECO:0000305" key="3"/>
<protein>
    <recommendedName>
        <fullName>Serine/threonine-protein phosphatase PP1</fullName>
        <ecNumber>3.1.3.16</ecNumber>
    </recommendedName>
</protein>
<feature type="chain" id="PRO_0000058807" description="Serine/threonine-protein phosphatase PP1">
    <location>
        <begin position="1"/>
        <end position="321"/>
    </location>
</feature>
<feature type="region of interest" description="Disordered" evidence="2">
    <location>
        <begin position="298"/>
        <end position="321"/>
    </location>
</feature>
<feature type="active site" description="Proton donor" evidence="1">
    <location>
        <position position="122"/>
    </location>
</feature>
<feature type="binding site" evidence="1">
    <location>
        <position position="61"/>
    </location>
    <ligand>
        <name>Mn(2+)</name>
        <dbReference type="ChEBI" id="CHEBI:29035"/>
        <label>1</label>
    </ligand>
</feature>
<feature type="binding site" evidence="1">
    <location>
        <position position="63"/>
    </location>
    <ligand>
        <name>Mn(2+)</name>
        <dbReference type="ChEBI" id="CHEBI:29035"/>
        <label>1</label>
    </ligand>
</feature>
<feature type="binding site" evidence="1">
    <location>
        <position position="89"/>
    </location>
    <ligand>
        <name>Mn(2+)</name>
        <dbReference type="ChEBI" id="CHEBI:29035"/>
        <label>1</label>
    </ligand>
</feature>
<feature type="binding site" evidence="1">
    <location>
        <position position="89"/>
    </location>
    <ligand>
        <name>Mn(2+)</name>
        <dbReference type="ChEBI" id="CHEBI:29035"/>
        <label>2</label>
    </ligand>
</feature>
<feature type="binding site" evidence="1">
    <location>
        <position position="121"/>
    </location>
    <ligand>
        <name>Mn(2+)</name>
        <dbReference type="ChEBI" id="CHEBI:29035"/>
        <label>2</label>
    </ligand>
</feature>
<feature type="binding site" evidence="1">
    <location>
        <position position="170"/>
    </location>
    <ligand>
        <name>Mn(2+)</name>
        <dbReference type="ChEBI" id="CHEBI:29035"/>
        <label>2</label>
    </ligand>
</feature>
<feature type="binding site" evidence="1">
    <location>
        <position position="245"/>
    </location>
    <ligand>
        <name>Mn(2+)</name>
        <dbReference type="ChEBI" id="CHEBI:29035"/>
        <label>2</label>
    </ligand>
</feature>
<accession>P48488</accession>
<organism>
    <name type="scientific">Medicago sativa subsp. varia</name>
    <name type="common">Alfalfa</name>
    <name type="synonym">Medicago varia</name>
    <dbReference type="NCBI Taxonomy" id="36902"/>
    <lineage>
        <taxon>Eukaryota</taxon>
        <taxon>Viridiplantae</taxon>
        <taxon>Streptophyta</taxon>
        <taxon>Embryophyta</taxon>
        <taxon>Tracheophyta</taxon>
        <taxon>Spermatophyta</taxon>
        <taxon>Magnoliopsida</taxon>
        <taxon>eudicotyledons</taxon>
        <taxon>Gunneridae</taxon>
        <taxon>Pentapetalae</taxon>
        <taxon>rosids</taxon>
        <taxon>fabids</taxon>
        <taxon>Fabales</taxon>
        <taxon>Fabaceae</taxon>
        <taxon>Papilionoideae</taxon>
        <taxon>50 kb inversion clade</taxon>
        <taxon>NPAAA clade</taxon>
        <taxon>Hologalegina</taxon>
        <taxon>IRL clade</taxon>
        <taxon>Trifolieae</taxon>
        <taxon>Medicago</taxon>
    </lineage>
</organism>
<name>PP1_MEDSV</name>